<accession>Q9LS99</accession>
<organism>
    <name type="scientific">Arabidopsis thaliana</name>
    <name type="common">Mouse-ear cress</name>
    <dbReference type="NCBI Taxonomy" id="3702"/>
    <lineage>
        <taxon>Eukaryota</taxon>
        <taxon>Viridiplantae</taxon>
        <taxon>Streptophyta</taxon>
        <taxon>Embryophyta</taxon>
        <taxon>Tracheophyta</taxon>
        <taxon>Spermatophyta</taxon>
        <taxon>Magnoliopsida</taxon>
        <taxon>eudicotyledons</taxon>
        <taxon>Gunneridae</taxon>
        <taxon>Pentapetalae</taxon>
        <taxon>rosids</taxon>
        <taxon>malvids</taxon>
        <taxon>Brassicales</taxon>
        <taxon>Brassicaceae</taxon>
        <taxon>Camelineae</taxon>
        <taxon>Arabidopsis</taxon>
    </lineage>
</organism>
<gene>
    <name type="primary">ATL77</name>
    <name type="ordered locus">At3g18773</name>
    <name type="ORF">MVE11.14</name>
</gene>
<evidence type="ECO:0000250" key="1"/>
<evidence type="ECO:0000255" key="2"/>
<evidence type="ECO:0000255" key="3">
    <source>
        <dbReference type="PROSITE-ProRule" id="PRU00175"/>
    </source>
</evidence>
<evidence type="ECO:0000305" key="4"/>
<reference key="1">
    <citation type="journal article" date="2000" name="DNA Res.">
        <title>Structural analysis of Arabidopsis thaliana chromosome 3. I. Sequence features of the regions of 4,504,864 bp covered by sixty P1 and TAC clones.</title>
        <authorList>
            <person name="Sato S."/>
            <person name="Nakamura Y."/>
            <person name="Kaneko T."/>
            <person name="Katoh T."/>
            <person name="Asamizu E."/>
            <person name="Tabata S."/>
        </authorList>
    </citation>
    <scope>NUCLEOTIDE SEQUENCE [LARGE SCALE GENOMIC DNA]</scope>
    <source>
        <strain>cv. Columbia</strain>
    </source>
</reference>
<reference key="2">
    <citation type="journal article" date="2017" name="Plant J.">
        <title>Araport11: a complete reannotation of the Arabidopsis thaliana reference genome.</title>
        <authorList>
            <person name="Cheng C.Y."/>
            <person name="Krishnakumar V."/>
            <person name="Chan A.P."/>
            <person name="Thibaud-Nissen F."/>
            <person name="Schobel S."/>
            <person name="Town C.D."/>
        </authorList>
    </citation>
    <scope>GENOME REANNOTATION</scope>
    <source>
        <strain>cv. Columbia</strain>
    </source>
</reference>
<reference key="3">
    <citation type="submission" date="2005-03" db="EMBL/GenBank/DDBJ databases">
        <title>Large-scale analysis of RIKEN Arabidopsis full-length (RAFL) cDNAs.</title>
        <authorList>
            <person name="Totoki Y."/>
            <person name="Seki M."/>
            <person name="Ishida J."/>
            <person name="Nakajima M."/>
            <person name="Enju A."/>
            <person name="Kamiya A."/>
            <person name="Narusaka M."/>
            <person name="Shin-i T."/>
            <person name="Nakagawa M."/>
            <person name="Sakamoto N."/>
            <person name="Oishi K."/>
            <person name="Kohara Y."/>
            <person name="Kobayashi M."/>
            <person name="Toyoda A."/>
            <person name="Sakaki Y."/>
            <person name="Sakurai T."/>
            <person name="Iida K."/>
            <person name="Akiyama K."/>
            <person name="Satou M."/>
            <person name="Toyoda T."/>
            <person name="Konagaya A."/>
            <person name="Carninci P."/>
            <person name="Kawai J."/>
            <person name="Hayashizaki Y."/>
            <person name="Shinozaki K."/>
        </authorList>
    </citation>
    <scope>NUCLEOTIDE SEQUENCE [LARGE SCALE MRNA]</scope>
    <source>
        <strain>cv. Columbia</strain>
    </source>
</reference>
<reference key="4">
    <citation type="submission" date="2006-04" db="EMBL/GenBank/DDBJ databases">
        <title>Arabidopsis ORF clones.</title>
        <authorList>
            <person name="Shinn P."/>
            <person name="Chen H."/>
            <person name="Kim C.J."/>
            <person name="Ecker J.R."/>
        </authorList>
    </citation>
    <scope>NUCLEOTIDE SEQUENCE [LARGE SCALE MRNA]</scope>
    <source>
        <strain>cv. Columbia</strain>
    </source>
</reference>
<reference key="5">
    <citation type="submission" date="2002-03" db="EMBL/GenBank/DDBJ databases">
        <title>Full-length cDNA from Arabidopsis thaliana.</title>
        <authorList>
            <person name="Brover V.V."/>
            <person name="Troukhan M.E."/>
            <person name="Alexandrov N.A."/>
            <person name="Lu Y.-P."/>
            <person name="Flavell R.B."/>
            <person name="Feldmann K.A."/>
        </authorList>
    </citation>
    <scope>NUCLEOTIDE SEQUENCE [LARGE SCALE MRNA]</scope>
</reference>
<reference key="6">
    <citation type="journal article" date="2002" name="Genome Biol.">
        <title>Evaluation and classification of RING-finger domains encoded by the Arabidopsis genome.</title>
        <authorList>
            <person name="Kosarev P."/>
            <person name="Mayer K.F.X."/>
            <person name="Hardtke C.S."/>
        </authorList>
    </citation>
    <scope>GENE FAMILY ORGANIZATION</scope>
</reference>
<reference key="7">
    <citation type="journal article" date="2006" name="J. Mol. Evol.">
        <title>The ATL gene family from Arabidopsis thaliana and Oryza sativa comprises a large number of putative ubiquitin ligases of the RING-H2 type.</title>
        <authorList>
            <person name="Serrano M."/>
            <person name="Parra S."/>
            <person name="Alcaraz L.D."/>
            <person name="Guzman P."/>
        </authorList>
    </citation>
    <scope>NOMENCLATURE</scope>
    <scope>GENE FAMILY ORGANIZATION</scope>
</reference>
<comment type="catalytic activity">
    <reaction evidence="4">
        <text>S-ubiquitinyl-[E2 ubiquitin-conjugating enzyme]-L-cysteine + [acceptor protein]-L-lysine = [E2 ubiquitin-conjugating enzyme]-L-cysteine + N(6)-ubiquitinyl-[acceptor protein]-L-lysine.</text>
        <dbReference type="EC" id="2.3.2.27"/>
    </reaction>
</comment>
<comment type="pathway">
    <text>Protein modification; protein ubiquitination.</text>
</comment>
<comment type="subcellular location">
    <subcellularLocation>
        <location evidence="4">Membrane</location>
        <topology evidence="4">Single-pass membrane protein</topology>
    </subcellularLocation>
</comment>
<comment type="domain">
    <text evidence="1">The RING-type zinc finger domain mediates binding to an E2 ubiquitin-conjugating enzyme.</text>
</comment>
<comment type="similarity">
    <text evidence="4">Belongs to the RING-type zinc finger family. ATL subfamily.</text>
</comment>
<name>ATL77_ARATH</name>
<protein>
    <recommendedName>
        <fullName>RING-H2 finger protein ATL77</fullName>
        <ecNumber evidence="4">2.3.2.27</ecNumber>
    </recommendedName>
    <alternativeName>
        <fullName evidence="4">RING-type E3 ubiquitin transferase ATL77</fullName>
    </alternativeName>
</protein>
<sequence length="220" mass="24463">MFSEHLPSSSSQVFQEHFIDSFVSRKLLQQIPFAHNAQQAHVPDKNNLSGNVLMLLSILLCGIICSLGLHYIIRCAFIRSRSFMISDPISIPSTPRDSSVNKGIKKKALKMLPVVNYSPEINLPGVGEECVICLSDFVAGEQLRVLPKCNHGFHLRCIDKWLTQHMTCPKCRHCLVDTCQKVLSDCDAADQVAATATESIDIRISPLEPEARVATFRESS</sequence>
<proteinExistence type="evidence at transcript level"/>
<keyword id="KW-0472">Membrane</keyword>
<keyword id="KW-0479">Metal-binding</keyword>
<keyword id="KW-1185">Reference proteome</keyword>
<keyword id="KW-0808">Transferase</keyword>
<keyword id="KW-0812">Transmembrane</keyword>
<keyword id="KW-1133">Transmembrane helix</keyword>
<keyword id="KW-0833">Ubl conjugation pathway</keyword>
<keyword id="KW-0862">Zinc</keyword>
<keyword id="KW-0863">Zinc-finger</keyword>
<feature type="chain" id="PRO_0000396125" description="RING-H2 finger protein ATL77">
    <location>
        <begin position="1"/>
        <end position="220"/>
    </location>
</feature>
<feature type="transmembrane region" description="Helical" evidence="2">
    <location>
        <begin position="53"/>
        <end position="73"/>
    </location>
</feature>
<feature type="zinc finger region" description="RING-type; atypical" evidence="3">
    <location>
        <begin position="130"/>
        <end position="172"/>
    </location>
</feature>
<dbReference type="EC" id="2.3.2.27" evidence="4"/>
<dbReference type="EMBL" id="AB026654">
    <property type="protein sequence ID" value="BAB01804.1"/>
    <property type="molecule type" value="Genomic_DNA"/>
</dbReference>
<dbReference type="EMBL" id="CP002686">
    <property type="protein sequence ID" value="AEE76145.1"/>
    <property type="molecule type" value="Genomic_DNA"/>
</dbReference>
<dbReference type="EMBL" id="AK222192">
    <property type="protein sequence ID" value="BAD95334.1"/>
    <property type="molecule type" value="mRNA"/>
</dbReference>
<dbReference type="EMBL" id="BT025292">
    <property type="protein sequence ID" value="ABF19045.1"/>
    <property type="molecule type" value="mRNA"/>
</dbReference>
<dbReference type="EMBL" id="AY086917">
    <property type="protein sequence ID" value="AAM64481.1"/>
    <property type="molecule type" value="mRNA"/>
</dbReference>
<dbReference type="RefSeq" id="NP_850610.1">
    <property type="nucleotide sequence ID" value="NM_180279.4"/>
</dbReference>
<dbReference type="SMR" id="Q9LS99"/>
<dbReference type="STRING" id="3702.Q9LS99"/>
<dbReference type="PaxDb" id="3702-AT3G18773.1"/>
<dbReference type="EnsemblPlants" id="AT3G18773.1">
    <property type="protein sequence ID" value="AT3G18773.1"/>
    <property type="gene ID" value="AT3G18773"/>
</dbReference>
<dbReference type="GeneID" id="821409"/>
<dbReference type="Gramene" id="AT3G18773.1">
    <property type="protein sequence ID" value="AT3G18773.1"/>
    <property type="gene ID" value="AT3G18773"/>
</dbReference>
<dbReference type="KEGG" id="ath:AT3G18773"/>
<dbReference type="Araport" id="AT3G18773"/>
<dbReference type="TAIR" id="AT3G18773">
    <property type="gene designation" value="ATL77"/>
</dbReference>
<dbReference type="eggNOG" id="KOG0800">
    <property type="taxonomic scope" value="Eukaryota"/>
</dbReference>
<dbReference type="HOGENOM" id="CLU_013137_9_0_1"/>
<dbReference type="InParanoid" id="Q9LS99"/>
<dbReference type="OMA" id="LTQHMTC"/>
<dbReference type="OrthoDB" id="8062037at2759"/>
<dbReference type="PhylomeDB" id="Q9LS99"/>
<dbReference type="UniPathway" id="UPA00143"/>
<dbReference type="PRO" id="PR:Q9LS99"/>
<dbReference type="Proteomes" id="UP000006548">
    <property type="component" value="Chromosome 3"/>
</dbReference>
<dbReference type="ExpressionAtlas" id="Q9LS99">
    <property type="expression patterns" value="baseline and differential"/>
</dbReference>
<dbReference type="GO" id="GO:0016020">
    <property type="term" value="C:membrane"/>
    <property type="evidence" value="ECO:0007669"/>
    <property type="project" value="UniProtKB-SubCell"/>
</dbReference>
<dbReference type="GO" id="GO:0016740">
    <property type="term" value="F:transferase activity"/>
    <property type="evidence" value="ECO:0007669"/>
    <property type="project" value="UniProtKB-KW"/>
</dbReference>
<dbReference type="GO" id="GO:0008270">
    <property type="term" value="F:zinc ion binding"/>
    <property type="evidence" value="ECO:0007669"/>
    <property type="project" value="UniProtKB-KW"/>
</dbReference>
<dbReference type="GO" id="GO:0016567">
    <property type="term" value="P:protein ubiquitination"/>
    <property type="evidence" value="ECO:0007669"/>
    <property type="project" value="UniProtKB-UniPathway"/>
</dbReference>
<dbReference type="CDD" id="cd16461">
    <property type="entry name" value="RING-H2_EL5-like"/>
    <property type="match status" value="1"/>
</dbReference>
<dbReference type="FunFam" id="3.30.40.10:FF:000632">
    <property type="entry name" value="RING-H2 finger protein ATL73"/>
    <property type="match status" value="1"/>
</dbReference>
<dbReference type="Gene3D" id="3.30.40.10">
    <property type="entry name" value="Zinc/RING finger domain, C3HC4 (zinc finger)"/>
    <property type="match status" value="1"/>
</dbReference>
<dbReference type="InterPro" id="IPR044602">
    <property type="entry name" value="ATL10/ATL72-79-like"/>
</dbReference>
<dbReference type="InterPro" id="IPR001841">
    <property type="entry name" value="Znf_RING"/>
</dbReference>
<dbReference type="InterPro" id="IPR013083">
    <property type="entry name" value="Znf_RING/FYVE/PHD"/>
</dbReference>
<dbReference type="PANTHER" id="PTHR46905:SF8">
    <property type="entry name" value="RING-H2 FINGER PROTEIN ATL77"/>
    <property type="match status" value="1"/>
</dbReference>
<dbReference type="PANTHER" id="PTHR46905">
    <property type="entry name" value="RING-H2 FINGER PROTEIN ATL78"/>
    <property type="match status" value="1"/>
</dbReference>
<dbReference type="Pfam" id="PF13639">
    <property type="entry name" value="zf-RING_2"/>
    <property type="match status" value="1"/>
</dbReference>
<dbReference type="SMART" id="SM00184">
    <property type="entry name" value="RING"/>
    <property type="match status" value="1"/>
</dbReference>
<dbReference type="SUPFAM" id="SSF57850">
    <property type="entry name" value="RING/U-box"/>
    <property type="match status" value="1"/>
</dbReference>
<dbReference type="PROSITE" id="PS50089">
    <property type="entry name" value="ZF_RING_2"/>
    <property type="match status" value="1"/>
</dbReference>